<comment type="function">
    <text evidence="1">Condenses 4-methyl-5-(beta-hydroxyethyl)thiazole monophosphate (THZ-P) and 2-methyl-4-amino-5-hydroxymethyl pyrimidine pyrophosphate (HMP-PP) to form thiamine monophosphate (TMP).</text>
</comment>
<comment type="catalytic activity">
    <reaction evidence="1">
        <text>2-[(2R,5Z)-2-carboxy-4-methylthiazol-5(2H)-ylidene]ethyl phosphate + 4-amino-2-methyl-5-(diphosphooxymethyl)pyrimidine + 2 H(+) = thiamine phosphate + CO2 + diphosphate</text>
        <dbReference type="Rhea" id="RHEA:47844"/>
        <dbReference type="ChEBI" id="CHEBI:15378"/>
        <dbReference type="ChEBI" id="CHEBI:16526"/>
        <dbReference type="ChEBI" id="CHEBI:33019"/>
        <dbReference type="ChEBI" id="CHEBI:37575"/>
        <dbReference type="ChEBI" id="CHEBI:57841"/>
        <dbReference type="ChEBI" id="CHEBI:62899"/>
        <dbReference type="EC" id="2.5.1.3"/>
    </reaction>
</comment>
<comment type="catalytic activity">
    <reaction evidence="1">
        <text>2-(2-carboxy-4-methylthiazol-5-yl)ethyl phosphate + 4-amino-2-methyl-5-(diphosphooxymethyl)pyrimidine + 2 H(+) = thiamine phosphate + CO2 + diphosphate</text>
        <dbReference type="Rhea" id="RHEA:47848"/>
        <dbReference type="ChEBI" id="CHEBI:15378"/>
        <dbReference type="ChEBI" id="CHEBI:16526"/>
        <dbReference type="ChEBI" id="CHEBI:33019"/>
        <dbReference type="ChEBI" id="CHEBI:37575"/>
        <dbReference type="ChEBI" id="CHEBI:57841"/>
        <dbReference type="ChEBI" id="CHEBI:62890"/>
        <dbReference type="EC" id="2.5.1.3"/>
    </reaction>
</comment>
<comment type="catalytic activity">
    <reaction evidence="1">
        <text>4-methyl-5-(2-phosphooxyethyl)-thiazole + 4-amino-2-methyl-5-(diphosphooxymethyl)pyrimidine + H(+) = thiamine phosphate + diphosphate</text>
        <dbReference type="Rhea" id="RHEA:22328"/>
        <dbReference type="ChEBI" id="CHEBI:15378"/>
        <dbReference type="ChEBI" id="CHEBI:33019"/>
        <dbReference type="ChEBI" id="CHEBI:37575"/>
        <dbReference type="ChEBI" id="CHEBI:57841"/>
        <dbReference type="ChEBI" id="CHEBI:58296"/>
        <dbReference type="EC" id="2.5.1.3"/>
    </reaction>
</comment>
<comment type="cofactor">
    <cofactor evidence="1">
        <name>Mg(2+)</name>
        <dbReference type="ChEBI" id="CHEBI:18420"/>
    </cofactor>
    <text evidence="1">Binds 1 Mg(2+) ion per subunit.</text>
</comment>
<comment type="pathway">
    <text evidence="1">Cofactor biosynthesis; thiamine diphosphate biosynthesis; thiamine phosphate from 4-amino-2-methyl-5-diphosphomethylpyrimidine and 4-methyl-5-(2-phosphoethyl)-thiazole: step 1/1.</text>
</comment>
<comment type="similarity">
    <text evidence="1">Belongs to the thiamine-phosphate synthase family.</text>
</comment>
<comment type="sequence caution" evidence="3">
    <conflict type="erroneous initiation">
        <sequence resource="EMBL-CDS" id="BAC88344"/>
    </conflict>
</comment>
<gene>
    <name evidence="1" type="primary">thiE</name>
    <name type="ordered locus">gll0403</name>
</gene>
<keyword id="KW-0460">Magnesium</keyword>
<keyword id="KW-0479">Metal-binding</keyword>
<keyword id="KW-1185">Reference proteome</keyword>
<keyword id="KW-0784">Thiamine biosynthesis</keyword>
<keyword id="KW-0808">Transferase</keyword>
<protein>
    <recommendedName>
        <fullName evidence="1">Thiamine-phosphate synthase</fullName>
        <shortName evidence="1">TP synthase</shortName>
        <shortName evidence="1">TPS</shortName>
        <ecNumber evidence="1">2.5.1.3</ecNumber>
    </recommendedName>
    <alternativeName>
        <fullName evidence="1">Thiamine-phosphate pyrophosphorylase</fullName>
        <shortName evidence="1">TMP pyrophosphorylase</shortName>
        <shortName evidence="1">TMP-PPase</shortName>
    </alternativeName>
</protein>
<organism>
    <name type="scientific">Gloeobacter violaceus (strain ATCC 29082 / PCC 7421)</name>
    <dbReference type="NCBI Taxonomy" id="251221"/>
    <lineage>
        <taxon>Bacteria</taxon>
        <taxon>Bacillati</taxon>
        <taxon>Cyanobacteriota</taxon>
        <taxon>Cyanophyceae</taxon>
        <taxon>Gloeobacterales</taxon>
        <taxon>Gloeobacteraceae</taxon>
        <taxon>Gloeobacter</taxon>
    </lineage>
</organism>
<feature type="chain" id="PRO_0000157079" description="Thiamine-phosphate synthase">
    <location>
        <begin position="1"/>
        <end position="341"/>
    </location>
</feature>
<feature type="region of interest" description="Unknown">
    <location>
        <begin position="1"/>
        <end position="123"/>
    </location>
</feature>
<feature type="region of interest" description="Disordered" evidence="2">
    <location>
        <begin position="61"/>
        <end position="80"/>
    </location>
</feature>
<feature type="region of interest" description="Thiamine-phosphate synthase">
    <location>
        <begin position="124"/>
        <end position="341"/>
    </location>
</feature>
<feature type="binding site" evidence="1">
    <location>
        <begin position="171"/>
        <end position="175"/>
    </location>
    <ligand>
        <name>4-amino-2-methyl-5-(diphosphooxymethyl)pyrimidine</name>
        <dbReference type="ChEBI" id="CHEBI:57841"/>
    </ligand>
</feature>
<feature type="binding site" evidence="1">
    <location>
        <position position="203"/>
    </location>
    <ligand>
        <name>4-amino-2-methyl-5-(diphosphooxymethyl)pyrimidine</name>
        <dbReference type="ChEBI" id="CHEBI:57841"/>
    </ligand>
</feature>
<feature type="binding site" evidence="1">
    <location>
        <position position="204"/>
    </location>
    <ligand>
        <name>Mg(2+)</name>
        <dbReference type="ChEBI" id="CHEBI:18420"/>
    </ligand>
</feature>
<feature type="binding site" evidence="1">
    <location>
        <position position="223"/>
    </location>
    <ligand>
        <name>Mg(2+)</name>
        <dbReference type="ChEBI" id="CHEBI:18420"/>
    </ligand>
</feature>
<feature type="binding site" evidence="1">
    <location>
        <position position="242"/>
    </location>
    <ligand>
        <name>4-amino-2-methyl-5-(diphosphooxymethyl)pyrimidine</name>
        <dbReference type="ChEBI" id="CHEBI:57841"/>
    </ligand>
</feature>
<feature type="binding site" evidence="1">
    <location>
        <begin position="268"/>
        <end position="270"/>
    </location>
    <ligand>
        <name>2-[(2R,5Z)-2-carboxy-4-methylthiazol-5(2H)-ylidene]ethyl phosphate</name>
        <dbReference type="ChEBI" id="CHEBI:62899"/>
    </ligand>
</feature>
<feature type="binding site" evidence="1">
    <location>
        <position position="271"/>
    </location>
    <ligand>
        <name>4-amino-2-methyl-5-(diphosphooxymethyl)pyrimidine</name>
        <dbReference type="ChEBI" id="CHEBI:57841"/>
    </ligand>
</feature>
<feature type="binding site" evidence="1">
    <location>
        <position position="298"/>
    </location>
    <ligand>
        <name>2-[(2R,5Z)-2-carboxy-4-methylthiazol-5(2H)-ylidene]ethyl phosphate</name>
        <dbReference type="ChEBI" id="CHEBI:62899"/>
    </ligand>
</feature>
<sequence>MAVVEEQVVLRILDANLDRAREGVRVVEEWLRFGGGPGESLAECKALRQQLGRFHTERLRAARDTPHDPGTGLEHPDEGVRSSPLDVVRVNFARIQEALRVLEEYAKLVQPDLAAAAKEWRYRVYTLESTATGGDLRTRLAAARLYLVTSPHPELIEIVEHALAVGLPLVQLREKEAPARAVLDIALRLRDVTLRHGALFIVNDRVDLALACGADGVHLGQEDLPLARARALMGPRLLIGQSTHAPAEAQQAVADGADYLGVGPVYATPTKQGRTPVGLEYVRHCRESIERPGFAIGGIDRSNLEAVIAAGAERIAVVRAIMAAEDPGRTTAWFLERLNRG</sequence>
<reference key="1">
    <citation type="journal article" date="2003" name="DNA Res.">
        <title>Complete genome structure of Gloeobacter violaceus PCC 7421, a cyanobacterium that lacks thylakoids.</title>
        <authorList>
            <person name="Nakamura Y."/>
            <person name="Kaneko T."/>
            <person name="Sato S."/>
            <person name="Mimuro M."/>
            <person name="Miyashita H."/>
            <person name="Tsuchiya T."/>
            <person name="Sasamoto S."/>
            <person name="Watanabe A."/>
            <person name="Kawashima K."/>
            <person name="Kishida Y."/>
            <person name="Kiyokawa C."/>
            <person name="Kohara M."/>
            <person name="Matsumoto M."/>
            <person name="Matsuno A."/>
            <person name="Nakazaki N."/>
            <person name="Shimpo S."/>
            <person name="Takeuchi C."/>
            <person name="Yamada M."/>
            <person name="Tabata S."/>
        </authorList>
    </citation>
    <scope>NUCLEOTIDE SEQUENCE [LARGE SCALE GENOMIC DNA]</scope>
    <source>
        <strain>ATCC 29082 / PCC 7421</strain>
    </source>
</reference>
<dbReference type="EC" id="2.5.1.3" evidence="1"/>
<dbReference type="EMBL" id="BA000045">
    <property type="protein sequence ID" value="BAC88344.1"/>
    <property type="status" value="ALT_INIT"/>
    <property type="molecule type" value="Genomic_DNA"/>
</dbReference>
<dbReference type="RefSeq" id="NP_923349.1">
    <property type="nucleotide sequence ID" value="NC_005125.1"/>
</dbReference>
<dbReference type="SMR" id="Q7NNK8"/>
<dbReference type="FunCoup" id="Q7NNK8">
    <property type="interactions" value="115"/>
</dbReference>
<dbReference type="STRING" id="251221.gene:10757875"/>
<dbReference type="EnsemblBacteria" id="BAC88344">
    <property type="protein sequence ID" value="BAC88344"/>
    <property type="gene ID" value="BAC88344"/>
</dbReference>
<dbReference type="KEGG" id="gvi:gll0403"/>
<dbReference type="PATRIC" id="fig|251221.4.peg.409"/>
<dbReference type="eggNOG" id="COG0352">
    <property type="taxonomic scope" value="Bacteria"/>
</dbReference>
<dbReference type="HOGENOM" id="CLU_064900_0_0_3"/>
<dbReference type="InParanoid" id="Q7NNK8"/>
<dbReference type="OrthoDB" id="9812206at2"/>
<dbReference type="PhylomeDB" id="Q7NNK8"/>
<dbReference type="UniPathway" id="UPA00060">
    <property type="reaction ID" value="UER00141"/>
</dbReference>
<dbReference type="Proteomes" id="UP000000557">
    <property type="component" value="Chromosome"/>
</dbReference>
<dbReference type="GO" id="GO:0005737">
    <property type="term" value="C:cytoplasm"/>
    <property type="evidence" value="ECO:0000318"/>
    <property type="project" value="GO_Central"/>
</dbReference>
<dbReference type="GO" id="GO:0000287">
    <property type="term" value="F:magnesium ion binding"/>
    <property type="evidence" value="ECO:0007669"/>
    <property type="project" value="UniProtKB-UniRule"/>
</dbReference>
<dbReference type="GO" id="GO:0004789">
    <property type="term" value="F:thiamine-phosphate diphosphorylase activity"/>
    <property type="evidence" value="ECO:0000318"/>
    <property type="project" value="GO_Central"/>
</dbReference>
<dbReference type="GO" id="GO:0009228">
    <property type="term" value="P:thiamine biosynthetic process"/>
    <property type="evidence" value="ECO:0000318"/>
    <property type="project" value="GO_Central"/>
</dbReference>
<dbReference type="GO" id="GO:0009229">
    <property type="term" value="P:thiamine diphosphate biosynthetic process"/>
    <property type="evidence" value="ECO:0007669"/>
    <property type="project" value="UniProtKB-UniRule"/>
</dbReference>
<dbReference type="CDD" id="cd00564">
    <property type="entry name" value="TMP_TenI"/>
    <property type="match status" value="1"/>
</dbReference>
<dbReference type="FunFam" id="3.20.20.70:FF:000178">
    <property type="entry name" value="Thiamine-phosphate synthase"/>
    <property type="match status" value="1"/>
</dbReference>
<dbReference type="Gene3D" id="3.20.20.70">
    <property type="entry name" value="Aldolase class I"/>
    <property type="match status" value="1"/>
</dbReference>
<dbReference type="HAMAP" id="MF_00097">
    <property type="entry name" value="TMP_synthase"/>
    <property type="match status" value="1"/>
</dbReference>
<dbReference type="HAMAP" id="MF_01327">
    <property type="entry name" value="TMP_synthase_cyanobact"/>
    <property type="match status" value="1"/>
</dbReference>
<dbReference type="InterPro" id="IPR013785">
    <property type="entry name" value="Aldolase_TIM"/>
</dbReference>
<dbReference type="InterPro" id="IPR036206">
    <property type="entry name" value="ThiamineP_synth_sf"/>
</dbReference>
<dbReference type="InterPro" id="IPR022998">
    <property type="entry name" value="ThiamineP_synth_TenI"/>
</dbReference>
<dbReference type="InterPro" id="IPR041397">
    <property type="entry name" value="ThiD2"/>
</dbReference>
<dbReference type="InterPro" id="IPR034291">
    <property type="entry name" value="TMP_synthase"/>
</dbReference>
<dbReference type="InterPro" id="IPR016229">
    <property type="entry name" value="TMP_synthase_cyanobac_bac"/>
</dbReference>
<dbReference type="NCBIfam" id="NF002727">
    <property type="entry name" value="PRK02615.1"/>
    <property type="match status" value="1"/>
</dbReference>
<dbReference type="NCBIfam" id="TIGR00693">
    <property type="entry name" value="thiE"/>
    <property type="match status" value="1"/>
</dbReference>
<dbReference type="PANTHER" id="PTHR20857">
    <property type="entry name" value="THIAMINE-PHOSPHATE PYROPHOSPHORYLASE"/>
    <property type="match status" value="1"/>
</dbReference>
<dbReference type="PANTHER" id="PTHR20857:SF15">
    <property type="entry name" value="THIAMINE-PHOSPHATE SYNTHASE"/>
    <property type="match status" value="1"/>
</dbReference>
<dbReference type="Pfam" id="PF17792">
    <property type="entry name" value="ThiD2"/>
    <property type="match status" value="1"/>
</dbReference>
<dbReference type="Pfam" id="PF02581">
    <property type="entry name" value="TMP-TENI"/>
    <property type="match status" value="1"/>
</dbReference>
<dbReference type="PIRSF" id="PIRSF000512">
    <property type="entry name" value="TMP_PPase_Cyanobac_prd"/>
    <property type="match status" value="1"/>
</dbReference>
<dbReference type="SUPFAM" id="SSF51391">
    <property type="entry name" value="Thiamin phosphate synthase"/>
    <property type="match status" value="1"/>
</dbReference>
<name>THIE_GLOVI</name>
<proteinExistence type="inferred from homology"/>
<accession>Q7NNK8</accession>
<evidence type="ECO:0000255" key="1">
    <source>
        <dbReference type="HAMAP-Rule" id="MF_01327"/>
    </source>
</evidence>
<evidence type="ECO:0000256" key="2">
    <source>
        <dbReference type="SAM" id="MobiDB-lite"/>
    </source>
</evidence>
<evidence type="ECO:0000305" key="3"/>